<proteinExistence type="inferred from homology"/>
<name>RL32_XANOM</name>
<sequence length="64" mass="7160">MAVQKSRVTPSRRGQRRSHDALTAKQLSTDPTSGEIHLRHHITADGYYRGKKVITTKSSAVQED</sequence>
<dbReference type="EMBL" id="AP008229">
    <property type="protein sequence ID" value="BAE67557.1"/>
    <property type="molecule type" value="Genomic_DNA"/>
</dbReference>
<dbReference type="RefSeq" id="WP_010368401.1">
    <property type="nucleotide sequence ID" value="NC_007705.1"/>
</dbReference>
<dbReference type="SMR" id="Q2P7C0"/>
<dbReference type="GeneID" id="97210654"/>
<dbReference type="KEGG" id="xom:XOO0802"/>
<dbReference type="HOGENOM" id="CLU_129084_2_1_6"/>
<dbReference type="GO" id="GO:0015934">
    <property type="term" value="C:large ribosomal subunit"/>
    <property type="evidence" value="ECO:0007669"/>
    <property type="project" value="InterPro"/>
</dbReference>
<dbReference type="GO" id="GO:0003735">
    <property type="term" value="F:structural constituent of ribosome"/>
    <property type="evidence" value="ECO:0007669"/>
    <property type="project" value="InterPro"/>
</dbReference>
<dbReference type="GO" id="GO:0006412">
    <property type="term" value="P:translation"/>
    <property type="evidence" value="ECO:0007669"/>
    <property type="project" value="UniProtKB-UniRule"/>
</dbReference>
<dbReference type="HAMAP" id="MF_00340">
    <property type="entry name" value="Ribosomal_bL32"/>
    <property type="match status" value="1"/>
</dbReference>
<dbReference type="InterPro" id="IPR002677">
    <property type="entry name" value="Ribosomal_bL32"/>
</dbReference>
<dbReference type="InterPro" id="IPR044957">
    <property type="entry name" value="Ribosomal_bL32_bact"/>
</dbReference>
<dbReference type="InterPro" id="IPR011332">
    <property type="entry name" value="Ribosomal_zn-bd"/>
</dbReference>
<dbReference type="NCBIfam" id="TIGR01031">
    <property type="entry name" value="rpmF_bact"/>
    <property type="match status" value="1"/>
</dbReference>
<dbReference type="PANTHER" id="PTHR35534">
    <property type="entry name" value="50S RIBOSOMAL PROTEIN L32"/>
    <property type="match status" value="1"/>
</dbReference>
<dbReference type="PANTHER" id="PTHR35534:SF1">
    <property type="entry name" value="LARGE RIBOSOMAL SUBUNIT PROTEIN BL32"/>
    <property type="match status" value="1"/>
</dbReference>
<dbReference type="Pfam" id="PF01783">
    <property type="entry name" value="Ribosomal_L32p"/>
    <property type="match status" value="1"/>
</dbReference>
<dbReference type="SUPFAM" id="SSF57829">
    <property type="entry name" value="Zn-binding ribosomal proteins"/>
    <property type="match status" value="1"/>
</dbReference>
<accession>Q2P7C0</accession>
<reference key="1">
    <citation type="journal article" date="2005" name="Jpn. Agric. Res. Q.">
        <title>Genome sequence of Xanthomonas oryzae pv. oryzae suggests contribution of large numbers of effector genes and insertion sequences to its race diversity.</title>
        <authorList>
            <person name="Ochiai H."/>
            <person name="Inoue Y."/>
            <person name="Takeya M."/>
            <person name="Sasaki A."/>
            <person name="Kaku H."/>
        </authorList>
    </citation>
    <scope>NUCLEOTIDE SEQUENCE [LARGE SCALE GENOMIC DNA]</scope>
    <source>
        <strain>MAFF 311018</strain>
    </source>
</reference>
<protein>
    <recommendedName>
        <fullName evidence="1">Large ribosomal subunit protein bL32</fullName>
    </recommendedName>
    <alternativeName>
        <fullName evidence="3">50S ribosomal protein L32</fullName>
    </alternativeName>
</protein>
<organism>
    <name type="scientific">Xanthomonas oryzae pv. oryzae (strain MAFF 311018)</name>
    <dbReference type="NCBI Taxonomy" id="342109"/>
    <lineage>
        <taxon>Bacteria</taxon>
        <taxon>Pseudomonadati</taxon>
        <taxon>Pseudomonadota</taxon>
        <taxon>Gammaproteobacteria</taxon>
        <taxon>Lysobacterales</taxon>
        <taxon>Lysobacteraceae</taxon>
        <taxon>Xanthomonas</taxon>
    </lineage>
</organism>
<comment type="similarity">
    <text evidence="1">Belongs to the bacterial ribosomal protein bL32 family.</text>
</comment>
<gene>
    <name evidence="1" type="primary">rpmF</name>
    <name type="ordered locus">XOO0802</name>
</gene>
<feature type="chain" id="PRO_0000296598" description="Large ribosomal subunit protein bL32">
    <location>
        <begin position="1"/>
        <end position="64"/>
    </location>
</feature>
<feature type="region of interest" description="Disordered" evidence="2">
    <location>
        <begin position="1"/>
        <end position="35"/>
    </location>
</feature>
<keyword id="KW-0687">Ribonucleoprotein</keyword>
<keyword id="KW-0689">Ribosomal protein</keyword>
<evidence type="ECO:0000255" key="1">
    <source>
        <dbReference type="HAMAP-Rule" id="MF_00340"/>
    </source>
</evidence>
<evidence type="ECO:0000256" key="2">
    <source>
        <dbReference type="SAM" id="MobiDB-lite"/>
    </source>
</evidence>
<evidence type="ECO:0000305" key="3"/>